<comment type="function">
    <text evidence="1">Part of the multicomponent 3-phenylpropionate dioxygenase. Converts 3-phenylpropionic acid (PP) and cinnamic acid (CI) into 3-phenylpropionate-dihydrodiol (PP-dihydrodiol) and cinnamic acid-dihydrodiol (CI-dihydrodiol), respectively.</text>
</comment>
<comment type="catalytic activity">
    <reaction evidence="1">
        <text>3-phenylpropanoate + NADH + O2 + H(+) = 3-(cis-5,6-dihydroxycyclohexa-1,3-dien-1-yl)propanoate + NAD(+)</text>
        <dbReference type="Rhea" id="RHEA:20357"/>
        <dbReference type="ChEBI" id="CHEBI:15378"/>
        <dbReference type="ChEBI" id="CHEBI:15379"/>
        <dbReference type="ChEBI" id="CHEBI:51057"/>
        <dbReference type="ChEBI" id="CHEBI:57540"/>
        <dbReference type="ChEBI" id="CHEBI:57945"/>
        <dbReference type="ChEBI" id="CHEBI:60087"/>
        <dbReference type="EC" id="1.14.12.19"/>
    </reaction>
</comment>
<comment type="catalytic activity">
    <reaction evidence="1">
        <text>(E)-cinnamate + NADH + O2 + H(+) = (2E)-3-(cis-5,6-dihydroxycyclohexa-1,3-dien-1-yl)prop-2-enoate + NAD(+)</text>
        <dbReference type="Rhea" id="RHEA:25058"/>
        <dbReference type="ChEBI" id="CHEBI:15378"/>
        <dbReference type="ChEBI" id="CHEBI:15379"/>
        <dbReference type="ChEBI" id="CHEBI:15669"/>
        <dbReference type="ChEBI" id="CHEBI:57540"/>
        <dbReference type="ChEBI" id="CHEBI:57945"/>
        <dbReference type="ChEBI" id="CHEBI:61451"/>
        <dbReference type="EC" id="1.14.12.19"/>
    </reaction>
</comment>
<comment type="pathway">
    <text evidence="1">Aromatic compound metabolism; 3-phenylpropanoate degradation.</text>
</comment>
<comment type="subunit">
    <text evidence="1">This dioxygenase system consists of four proteins: the two subunits of the hydroxylase component (HcaE and HcaF), a ferredoxin (HcaC) and a ferredoxin reductase (HcaD).</text>
</comment>
<comment type="similarity">
    <text evidence="1">Belongs to the bacterial ring-hydroxylating dioxygenase beta subunit family.</text>
</comment>
<keyword id="KW-0058">Aromatic hydrocarbons catabolism</keyword>
<keyword id="KW-0223">Dioxygenase</keyword>
<keyword id="KW-0520">NAD</keyword>
<keyword id="KW-0560">Oxidoreductase</keyword>
<feature type="chain" id="PRO_1000186977" description="3-phenylpropionate/cinnamic acid dioxygenase subunit beta">
    <location>
        <begin position="1"/>
        <end position="172"/>
    </location>
</feature>
<proteinExistence type="inferred from homology"/>
<protein>
    <recommendedName>
        <fullName evidence="1">3-phenylpropionate/cinnamic acid dioxygenase subunit beta</fullName>
        <ecNumber evidence="1">1.14.12.19</ecNumber>
    </recommendedName>
</protein>
<dbReference type="EC" id="1.14.12.19" evidence="1"/>
<dbReference type="EMBL" id="CP000946">
    <property type="protein sequence ID" value="ACA76805.1"/>
    <property type="molecule type" value="Genomic_DNA"/>
</dbReference>
<dbReference type="RefSeq" id="WP_001276076.1">
    <property type="nucleotide sequence ID" value="NZ_MTFT01000002.1"/>
</dbReference>
<dbReference type="SMR" id="B1IVT8"/>
<dbReference type="KEGG" id="ecl:EcolC_1138"/>
<dbReference type="HOGENOM" id="CLU_102527_1_1_6"/>
<dbReference type="UniPathway" id="UPA00714"/>
<dbReference type="GO" id="GO:0008695">
    <property type="term" value="F:3-phenylpropionate dioxygenase activity"/>
    <property type="evidence" value="ECO:0007669"/>
    <property type="project" value="UniProtKB-UniRule"/>
</dbReference>
<dbReference type="GO" id="GO:0019380">
    <property type="term" value="P:3-phenylpropionate catabolic process"/>
    <property type="evidence" value="ECO:0007669"/>
    <property type="project" value="UniProtKB-UniRule"/>
</dbReference>
<dbReference type="CDD" id="cd00667">
    <property type="entry name" value="ring_hydroxylating_dioxygenases_beta"/>
    <property type="match status" value="1"/>
</dbReference>
<dbReference type="FunFam" id="3.10.450.50:FF:000008">
    <property type="entry name" value="3-phenylpropionate/cinnamic acid dioxygenase subunit beta"/>
    <property type="match status" value="1"/>
</dbReference>
<dbReference type="Gene3D" id="3.10.450.50">
    <property type="match status" value="1"/>
</dbReference>
<dbReference type="HAMAP" id="MF_01649">
    <property type="entry name" value="HcaF"/>
    <property type="match status" value="1"/>
</dbReference>
<dbReference type="InterPro" id="IPR054881">
    <property type="entry name" value="3PPDioc_HcaF"/>
</dbReference>
<dbReference type="InterPro" id="IPR023712">
    <property type="entry name" value="HcaF"/>
</dbReference>
<dbReference type="InterPro" id="IPR032710">
    <property type="entry name" value="NTF2-like_dom_sf"/>
</dbReference>
<dbReference type="InterPro" id="IPR000391">
    <property type="entry name" value="Rng_hydr_dOase-bsu"/>
</dbReference>
<dbReference type="NCBIfam" id="NF042947">
    <property type="entry name" value="3PPDioc_HcaF"/>
    <property type="match status" value="1"/>
</dbReference>
<dbReference type="NCBIfam" id="NF007479">
    <property type="entry name" value="PRK10069.1"/>
    <property type="match status" value="1"/>
</dbReference>
<dbReference type="PANTHER" id="PTHR41534:SF2">
    <property type="entry name" value="3-PHENYLPROPIONATE_CINNAMIC ACID DIOXYGENASE SUBUNIT BETA"/>
    <property type="match status" value="1"/>
</dbReference>
<dbReference type="PANTHER" id="PTHR41534">
    <property type="entry name" value="BLR3401 PROTEIN"/>
    <property type="match status" value="1"/>
</dbReference>
<dbReference type="Pfam" id="PF00866">
    <property type="entry name" value="Ring_hydroxyl_B"/>
    <property type="match status" value="1"/>
</dbReference>
<dbReference type="SUPFAM" id="SSF54427">
    <property type="entry name" value="NTF2-like"/>
    <property type="match status" value="1"/>
</dbReference>
<name>HCAF_ECOLC</name>
<gene>
    <name evidence="1" type="primary">hcaF</name>
    <name type="ordered locus">EcolC_1138</name>
</gene>
<evidence type="ECO:0000255" key="1">
    <source>
        <dbReference type="HAMAP-Rule" id="MF_01649"/>
    </source>
</evidence>
<accession>B1IVT8</accession>
<sequence>MSAQVSLELHHRISQFLFHEASLLDDWKFRDWLAQLDEEIRYTMRTTVNAQTRDRRKGVQPPTTWIFNDTKDQLERRIARLETGMAWAEEPPSRTRHLISNCQVSETDIPNVFAVRVNYLLYRAQKERDETFYVGTRFDKVRRLEDDNWRLLERDIVLDQAVITSHNLSVLF</sequence>
<organism>
    <name type="scientific">Escherichia coli (strain ATCC 8739 / DSM 1576 / NBRC 3972 / NCIMB 8545 / WDCM 00012 / Crooks)</name>
    <dbReference type="NCBI Taxonomy" id="481805"/>
    <lineage>
        <taxon>Bacteria</taxon>
        <taxon>Pseudomonadati</taxon>
        <taxon>Pseudomonadota</taxon>
        <taxon>Gammaproteobacteria</taxon>
        <taxon>Enterobacterales</taxon>
        <taxon>Enterobacteriaceae</taxon>
        <taxon>Escherichia</taxon>
    </lineage>
</organism>
<reference key="1">
    <citation type="submission" date="2008-02" db="EMBL/GenBank/DDBJ databases">
        <title>Complete sequence of Escherichia coli C str. ATCC 8739.</title>
        <authorList>
            <person name="Copeland A."/>
            <person name="Lucas S."/>
            <person name="Lapidus A."/>
            <person name="Glavina del Rio T."/>
            <person name="Dalin E."/>
            <person name="Tice H."/>
            <person name="Bruce D."/>
            <person name="Goodwin L."/>
            <person name="Pitluck S."/>
            <person name="Kiss H."/>
            <person name="Brettin T."/>
            <person name="Detter J.C."/>
            <person name="Han C."/>
            <person name="Kuske C.R."/>
            <person name="Schmutz J."/>
            <person name="Larimer F."/>
            <person name="Land M."/>
            <person name="Hauser L."/>
            <person name="Kyrpides N."/>
            <person name="Mikhailova N."/>
            <person name="Ingram L."/>
            <person name="Richardson P."/>
        </authorList>
    </citation>
    <scope>NUCLEOTIDE SEQUENCE [LARGE SCALE GENOMIC DNA]</scope>
    <source>
        <strain>ATCC 8739 / DSM 1576 / NBRC 3972 / NCIMB 8545 / WDCM 00012 / Crooks</strain>
    </source>
</reference>